<accession>A7FN96</accession>
<organism>
    <name type="scientific">Yersinia pseudotuberculosis serotype O:1b (strain IP 31758)</name>
    <dbReference type="NCBI Taxonomy" id="349747"/>
    <lineage>
        <taxon>Bacteria</taxon>
        <taxon>Pseudomonadati</taxon>
        <taxon>Pseudomonadota</taxon>
        <taxon>Gammaproteobacteria</taxon>
        <taxon>Enterobacterales</taxon>
        <taxon>Yersiniaceae</taxon>
        <taxon>Yersinia</taxon>
    </lineage>
</organism>
<gene>
    <name evidence="1" type="primary">lexA</name>
    <name type="ordered locus">YpsIP31758_3770</name>
</gene>
<feature type="chain" id="PRO_1000057135" description="LexA repressor">
    <location>
        <begin position="1"/>
        <end position="202"/>
    </location>
</feature>
<feature type="DNA-binding region" description="H-T-H motif" evidence="1">
    <location>
        <begin position="28"/>
        <end position="48"/>
    </location>
</feature>
<feature type="active site" description="For autocatalytic cleavage activity" evidence="1">
    <location>
        <position position="119"/>
    </location>
</feature>
<feature type="active site" description="For autocatalytic cleavage activity" evidence="1">
    <location>
        <position position="156"/>
    </location>
</feature>
<feature type="site" description="Cleavage; by autolysis" evidence="1">
    <location>
        <begin position="84"/>
        <end position="85"/>
    </location>
</feature>
<keyword id="KW-0068">Autocatalytic cleavage</keyword>
<keyword id="KW-0227">DNA damage</keyword>
<keyword id="KW-0234">DNA repair</keyword>
<keyword id="KW-0235">DNA replication</keyword>
<keyword id="KW-0238">DNA-binding</keyword>
<keyword id="KW-0378">Hydrolase</keyword>
<keyword id="KW-0678">Repressor</keyword>
<keyword id="KW-0742">SOS response</keyword>
<keyword id="KW-0804">Transcription</keyword>
<keyword id="KW-0805">Transcription regulation</keyword>
<sequence>MKALTTRQQEVYDLVRDHLAQTGMPPTRAEIAQRLGFRSPNAAEEHLKALARKGVIEIVSGASRGIRLLMEEEEGLPLIGRVAAGEPLLAQQHIEGHYKVDPSLFKPGADFLLRVNGMSMRDIGILDGDLLAVHKTQDVRNGQVVVARIDDEVTVKRLKKQGNIVHLLPENSEFQPIVVDLREQSFTIEGLAVGVIRNGDWI</sequence>
<reference key="1">
    <citation type="journal article" date="2007" name="PLoS Genet.">
        <title>The complete genome sequence of Yersinia pseudotuberculosis IP31758, the causative agent of Far East scarlet-like fever.</title>
        <authorList>
            <person name="Eppinger M."/>
            <person name="Rosovitz M.J."/>
            <person name="Fricke W.F."/>
            <person name="Rasko D.A."/>
            <person name="Kokorina G."/>
            <person name="Fayolle C."/>
            <person name="Lindler L.E."/>
            <person name="Carniel E."/>
            <person name="Ravel J."/>
        </authorList>
    </citation>
    <scope>NUCLEOTIDE SEQUENCE [LARGE SCALE GENOMIC DNA]</scope>
    <source>
        <strain>IP 31758</strain>
    </source>
</reference>
<evidence type="ECO:0000255" key="1">
    <source>
        <dbReference type="HAMAP-Rule" id="MF_00015"/>
    </source>
</evidence>
<protein>
    <recommendedName>
        <fullName evidence="1">LexA repressor</fullName>
        <ecNumber evidence="1">3.4.21.88</ecNumber>
    </recommendedName>
</protein>
<name>LEXA_YERP3</name>
<dbReference type="EC" id="3.4.21.88" evidence="1"/>
<dbReference type="EMBL" id="CP000720">
    <property type="protein sequence ID" value="ABS49693.1"/>
    <property type="molecule type" value="Genomic_DNA"/>
</dbReference>
<dbReference type="RefSeq" id="WP_002209090.1">
    <property type="nucleotide sequence ID" value="NC_009708.1"/>
</dbReference>
<dbReference type="SMR" id="A7FN96"/>
<dbReference type="MEROPS" id="S24.001"/>
<dbReference type="GeneID" id="57974290"/>
<dbReference type="KEGG" id="ypi:YpsIP31758_3770"/>
<dbReference type="HOGENOM" id="CLU_066192_45_3_6"/>
<dbReference type="Proteomes" id="UP000002412">
    <property type="component" value="Chromosome"/>
</dbReference>
<dbReference type="GO" id="GO:0003677">
    <property type="term" value="F:DNA binding"/>
    <property type="evidence" value="ECO:0007669"/>
    <property type="project" value="UniProtKB-UniRule"/>
</dbReference>
<dbReference type="GO" id="GO:0004252">
    <property type="term" value="F:serine-type endopeptidase activity"/>
    <property type="evidence" value="ECO:0007669"/>
    <property type="project" value="UniProtKB-UniRule"/>
</dbReference>
<dbReference type="GO" id="GO:0006281">
    <property type="term" value="P:DNA repair"/>
    <property type="evidence" value="ECO:0007669"/>
    <property type="project" value="UniProtKB-UniRule"/>
</dbReference>
<dbReference type="GO" id="GO:0006260">
    <property type="term" value="P:DNA replication"/>
    <property type="evidence" value="ECO:0007669"/>
    <property type="project" value="UniProtKB-UniRule"/>
</dbReference>
<dbReference type="GO" id="GO:0045892">
    <property type="term" value="P:negative regulation of DNA-templated transcription"/>
    <property type="evidence" value="ECO:0007669"/>
    <property type="project" value="UniProtKB-UniRule"/>
</dbReference>
<dbReference type="GO" id="GO:0006508">
    <property type="term" value="P:proteolysis"/>
    <property type="evidence" value="ECO:0007669"/>
    <property type="project" value="InterPro"/>
</dbReference>
<dbReference type="GO" id="GO:0009432">
    <property type="term" value="P:SOS response"/>
    <property type="evidence" value="ECO:0007669"/>
    <property type="project" value="UniProtKB-UniRule"/>
</dbReference>
<dbReference type="CDD" id="cd06529">
    <property type="entry name" value="S24_LexA-like"/>
    <property type="match status" value="1"/>
</dbReference>
<dbReference type="FunFam" id="1.10.10.10:FF:000009">
    <property type="entry name" value="LexA repressor"/>
    <property type="match status" value="1"/>
</dbReference>
<dbReference type="FunFam" id="2.10.109.10:FF:000001">
    <property type="entry name" value="LexA repressor"/>
    <property type="match status" value="1"/>
</dbReference>
<dbReference type="Gene3D" id="2.10.109.10">
    <property type="entry name" value="Umud Fragment, subunit A"/>
    <property type="match status" value="1"/>
</dbReference>
<dbReference type="Gene3D" id="1.10.10.10">
    <property type="entry name" value="Winged helix-like DNA-binding domain superfamily/Winged helix DNA-binding domain"/>
    <property type="match status" value="1"/>
</dbReference>
<dbReference type="HAMAP" id="MF_00015">
    <property type="entry name" value="LexA"/>
    <property type="match status" value="1"/>
</dbReference>
<dbReference type="InterPro" id="IPR006200">
    <property type="entry name" value="LexA"/>
</dbReference>
<dbReference type="InterPro" id="IPR039418">
    <property type="entry name" value="LexA-like"/>
</dbReference>
<dbReference type="InterPro" id="IPR036286">
    <property type="entry name" value="LexA/Signal_pep-like_sf"/>
</dbReference>
<dbReference type="InterPro" id="IPR006199">
    <property type="entry name" value="LexA_DNA-bd_dom"/>
</dbReference>
<dbReference type="InterPro" id="IPR050077">
    <property type="entry name" value="LexA_repressor"/>
</dbReference>
<dbReference type="InterPro" id="IPR006197">
    <property type="entry name" value="Peptidase_S24_LexA"/>
</dbReference>
<dbReference type="InterPro" id="IPR015927">
    <property type="entry name" value="Peptidase_S24_S26A/B/C"/>
</dbReference>
<dbReference type="InterPro" id="IPR036388">
    <property type="entry name" value="WH-like_DNA-bd_sf"/>
</dbReference>
<dbReference type="InterPro" id="IPR036390">
    <property type="entry name" value="WH_DNA-bd_sf"/>
</dbReference>
<dbReference type="NCBIfam" id="TIGR00498">
    <property type="entry name" value="lexA"/>
    <property type="match status" value="1"/>
</dbReference>
<dbReference type="PANTHER" id="PTHR33516">
    <property type="entry name" value="LEXA REPRESSOR"/>
    <property type="match status" value="1"/>
</dbReference>
<dbReference type="PANTHER" id="PTHR33516:SF2">
    <property type="entry name" value="LEXA REPRESSOR-RELATED"/>
    <property type="match status" value="1"/>
</dbReference>
<dbReference type="Pfam" id="PF01726">
    <property type="entry name" value="LexA_DNA_bind"/>
    <property type="match status" value="1"/>
</dbReference>
<dbReference type="Pfam" id="PF00717">
    <property type="entry name" value="Peptidase_S24"/>
    <property type="match status" value="1"/>
</dbReference>
<dbReference type="PRINTS" id="PR00726">
    <property type="entry name" value="LEXASERPTASE"/>
</dbReference>
<dbReference type="SUPFAM" id="SSF51306">
    <property type="entry name" value="LexA/Signal peptidase"/>
    <property type="match status" value="1"/>
</dbReference>
<dbReference type="SUPFAM" id="SSF46785">
    <property type="entry name" value="Winged helix' DNA-binding domain"/>
    <property type="match status" value="1"/>
</dbReference>
<comment type="function">
    <text evidence="1">Represses a number of genes involved in the response to DNA damage (SOS response), including recA and lexA. Binds to the 16 bp palindromic sequence 5'-CTGTATATATATACAG-3'. In the presence of single-stranded DNA, RecA interacts with LexA causing an autocatalytic cleavage which disrupts the DNA-binding part of LexA, leading to derepression of the SOS regulon and eventually DNA repair.</text>
</comment>
<comment type="catalytic activity">
    <reaction evidence="1">
        <text>Hydrolysis of Ala-|-Gly bond in repressor LexA.</text>
        <dbReference type="EC" id="3.4.21.88"/>
    </reaction>
</comment>
<comment type="subunit">
    <text evidence="1">Homodimer.</text>
</comment>
<comment type="similarity">
    <text evidence="1">Belongs to the peptidase S24 family.</text>
</comment>
<proteinExistence type="inferred from homology"/>